<accession>Q76P07</accession>
<accession>Q54ZS9</accession>
<sequence length="833" mass="93467">MEIHSVGPFIIGKTLGQGTTGKVKLGFHKDTGFKVGIKIINKELLINKPSMRRKIEREIVLMKLIDHPNAMKMYEVYETSKYLFLILEYVEGGELFDYLVEKGGLESGEALFFFQQIIIGLEYCHSRNICHRDLKPENLLLSGDKRIKIADFGMGSIVRKDMLLHTSCGSPHYASPEVVSGIDYDGQKADVWSCGVILYALLTGKLPFDDENIRRLLNKVKNGAFSMPPYIHKDAQDLLTKMLTVDPSKRISIKEIKEHPWFVSNFNQFQKATPVEEINAEPLVDYSQIDEDIFRSLMALGVGTIDEVKQQLVSNQKSATLIYYRLLEERKKFDSDVNKYGYKPKETRRNSLSDMSLKKIFSGSNNNNNNNNNNNNNNNNNNNNNNNNNNNNNNNNNININNNNNNNNNNNNNNNNNNNNNNNNNNNNNNNNSAVGKSNDSSSQQPPHIQQPHSQQIPSNSTSQESMQISPSNSANNMAIQQPIINNNNNNNNNNNNINNNINNNINNNINNNSNNVNRPTSEGLLKQALQQHHQQQQQQFNGNNNNNTMNVQPLTMSASSSSSSSSTTPSLSPNSSTTSSTSTSPQLSAIKPDHYQRRGSMTASTNPATSPTMSHRGKTSSPIEITSKVRKLKISESQSNTPNSPIIGSSPKKSWFSYFFSKNSSSNNLNAANGSAPSSPSLQSNGVGQLQTTQANYVIESKIDVNLIYVNLEKIIKKYGFELKYQQQQQQQNIKHCIVRSHHINSDGTPQFECEIEIKPSTFINPVSPSKQHHHHHHQQQQPQQQQMPPLNLNGGQNINHDQGFRVSIIHKSGSQHKFNNFTSSLEQILTI</sequence>
<evidence type="ECO:0000255" key="1">
    <source>
        <dbReference type="PROSITE-ProRule" id="PRU00159"/>
    </source>
</evidence>
<evidence type="ECO:0000255" key="2">
    <source>
        <dbReference type="PROSITE-ProRule" id="PRU10027"/>
    </source>
</evidence>
<evidence type="ECO:0000256" key="3">
    <source>
        <dbReference type="SAM" id="MobiDB-lite"/>
    </source>
</evidence>
<evidence type="ECO:0000305" key="4"/>
<comment type="catalytic activity">
    <reaction>
        <text>L-seryl-[protein] + ATP = O-phospho-L-seryl-[protein] + ADP + H(+)</text>
        <dbReference type="Rhea" id="RHEA:17989"/>
        <dbReference type="Rhea" id="RHEA-COMP:9863"/>
        <dbReference type="Rhea" id="RHEA-COMP:11604"/>
        <dbReference type="ChEBI" id="CHEBI:15378"/>
        <dbReference type="ChEBI" id="CHEBI:29999"/>
        <dbReference type="ChEBI" id="CHEBI:30616"/>
        <dbReference type="ChEBI" id="CHEBI:83421"/>
        <dbReference type="ChEBI" id="CHEBI:456216"/>
        <dbReference type="EC" id="2.7.11.1"/>
    </reaction>
</comment>
<comment type="catalytic activity">
    <reaction>
        <text>L-threonyl-[protein] + ATP = O-phospho-L-threonyl-[protein] + ADP + H(+)</text>
        <dbReference type="Rhea" id="RHEA:46608"/>
        <dbReference type="Rhea" id="RHEA-COMP:11060"/>
        <dbReference type="Rhea" id="RHEA-COMP:11605"/>
        <dbReference type="ChEBI" id="CHEBI:15378"/>
        <dbReference type="ChEBI" id="CHEBI:30013"/>
        <dbReference type="ChEBI" id="CHEBI:30616"/>
        <dbReference type="ChEBI" id="CHEBI:61977"/>
        <dbReference type="ChEBI" id="CHEBI:456216"/>
        <dbReference type="EC" id="2.7.11.1"/>
    </reaction>
</comment>
<comment type="similarity">
    <text evidence="4">Belongs to the protein kinase superfamily. CAMK Ser/Thr protein kinase family.</text>
</comment>
<proteinExistence type="inferred from homology"/>
<feature type="chain" id="PRO_0000367468" description="Probable serine/threonine-protein kinase DDB_G0277165">
    <location>
        <begin position="1"/>
        <end position="833"/>
    </location>
</feature>
<feature type="domain" description="Protein kinase" evidence="1">
    <location>
        <begin position="9"/>
        <end position="262"/>
    </location>
</feature>
<feature type="domain" description="UBA">
    <location>
        <begin position="288"/>
        <end position="329"/>
    </location>
</feature>
<feature type="region of interest" description="Disordered" evidence="3">
    <location>
        <begin position="338"/>
        <end position="472"/>
    </location>
</feature>
<feature type="region of interest" description="Disordered" evidence="3">
    <location>
        <begin position="528"/>
        <end position="626"/>
    </location>
</feature>
<feature type="region of interest" description="Disordered" evidence="3">
    <location>
        <begin position="764"/>
        <end position="799"/>
    </location>
</feature>
<feature type="compositionally biased region" description="Basic and acidic residues" evidence="3">
    <location>
        <begin position="338"/>
        <end position="351"/>
    </location>
</feature>
<feature type="compositionally biased region" description="Low complexity" evidence="3">
    <location>
        <begin position="365"/>
        <end position="432"/>
    </location>
</feature>
<feature type="compositionally biased region" description="Low complexity" evidence="3">
    <location>
        <begin position="441"/>
        <end position="459"/>
    </location>
</feature>
<feature type="compositionally biased region" description="Polar residues" evidence="3">
    <location>
        <begin position="460"/>
        <end position="472"/>
    </location>
</feature>
<feature type="compositionally biased region" description="Low complexity" evidence="3">
    <location>
        <begin position="528"/>
        <end position="589"/>
    </location>
</feature>
<feature type="compositionally biased region" description="Polar residues" evidence="3">
    <location>
        <begin position="600"/>
        <end position="625"/>
    </location>
</feature>
<feature type="active site" description="Proton acceptor" evidence="1 2">
    <location>
        <position position="133"/>
    </location>
</feature>
<feature type="binding site" evidence="1">
    <location>
        <begin position="15"/>
        <end position="23"/>
    </location>
    <ligand>
        <name>ATP</name>
        <dbReference type="ChEBI" id="CHEBI:30616"/>
    </ligand>
</feature>
<feature type="binding site" evidence="1">
    <location>
        <position position="38"/>
    </location>
    <ligand>
        <name>ATP</name>
        <dbReference type="ChEBI" id="CHEBI:30616"/>
    </ligand>
</feature>
<keyword id="KW-0067">ATP-binding</keyword>
<keyword id="KW-0418">Kinase</keyword>
<keyword id="KW-0547">Nucleotide-binding</keyword>
<keyword id="KW-1185">Reference proteome</keyword>
<keyword id="KW-0723">Serine/threonine-protein kinase</keyword>
<keyword id="KW-0808">Transferase</keyword>
<dbReference type="EC" id="2.7.11.1"/>
<dbReference type="EMBL" id="AAFI02000019">
    <property type="protein sequence ID" value="EAL68768.1"/>
    <property type="molecule type" value="Genomic_DNA"/>
</dbReference>
<dbReference type="RefSeq" id="XP_642787.1">
    <property type="nucleotide sequence ID" value="XM_637695.1"/>
</dbReference>
<dbReference type="SMR" id="Q76P07"/>
<dbReference type="FunCoup" id="Q76P07">
    <property type="interactions" value="5"/>
</dbReference>
<dbReference type="STRING" id="44689.Q76P07"/>
<dbReference type="PaxDb" id="44689-DDB0229364"/>
<dbReference type="EnsemblProtists" id="EAL68768">
    <property type="protein sequence ID" value="EAL68768"/>
    <property type="gene ID" value="DDB_G0277165"/>
</dbReference>
<dbReference type="GeneID" id="8620980"/>
<dbReference type="KEGG" id="ddi:DDB_G0277165"/>
<dbReference type="dictyBase" id="DDB_G0277165"/>
<dbReference type="VEuPathDB" id="AmoebaDB:DDB_G0277165"/>
<dbReference type="eggNOG" id="KOG0588">
    <property type="taxonomic scope" value="Eukaryota"/>
</dbReference>
<dbReference type="HOGENOM" id="CLU_340804_0_0_1"/>
<dbReference type="InParanoid" id="Q76P07"/>
<dbReference type="OMA" id="KCAPKIR"/>
<dbReference type="PRO" id="PR:Q76P07"/>
<dbReference type="Proteomes" id="UP000002195">
    <property type="component" value="Chromosome 2"/>
</dbReference>
<dbReference type="GO" id="GO:0005524">
    <property type="term" value="F:ATP binding"/>
    <property type="evidence" value="ECO:0007669"/>
    <property type="project" value="UniProtKB-KW"/>
</dbReference>
<dbReference type="GO" id="GO:0106310">
    <property type="term" value="F:protein serine kinase activity"/>
    <property type="evidence" value="ECO:0007669"/>
    <property type="project" value="RHEA"/>
</dbReference>
<dbReference type="GO" id="GO:0004674">
    <property type="term" value="F:protein serine/threonine kinase activity"/>
    <property type="evidence" value="ECO:0000318"/>
    <property type="project" value="GO_Central"/>
</dbReference>
<dbReference type="GO" id="GO:0000086">
    <property type="term" value="P:G2/M transition of mitotic cell cycle"/>
    <property type="evidence" value="ECO:0000318"/>
    <property type="project" value="GO_Central"/>
</dbReference>
<dbReference type="GO" id="GO:0030587">
    <property type="term" value="P:sorocarp development"/>
    <property type="evidence" value="ECO:0007001"/>
    <property type="project" value="dictyBase"/>
</dbReference>
<dbReference type="CDD" id="cd14081">
    <property type="entry name" value="STKc_BRSK1_2"/>
    <property type="match status" value="1"/>
</dbReference>
<dbReference type="FunFam" id="1.10.510.10:FF:000777">
    <property type="entry name" value="CAMK family protein kinase"/>
    <property type="match status" value="1"/>
</dbReference>
<dbReference type="FunFam" id="3.30.200.20:FF:000003">
    <property type="entry name" value="Non-specific serine/threonine protein kinase"/>
    <property type="match status" value="1"/>
</dbReference>
<dbReference type="Gene3D" id="1.10.510.10">
    <property type="entry name" value="Transferase(Phosphotransferase) domain 1"/>
    <property type="match status" value="1"/>
</dbReference>
<dbReference type="InterPro" id="IPR011009">
    <property type="entry name" value="Kinase-like_dom_sf"/>
</dbReference>
<dbReference type="InterPro" id="IPR000719">
    <property type="entry name" value="Prot_kinase_dom"/>
</dbReference>
<dbReference type="InterPro" id="IPR008271">
    <property type="entry name" value="Ser/Thr_kinase_AS"/>
</dbReference>
<dbReference type="PANTHER" id="PTHR24346">
    <property type="entry name" value="MAP/MICROTUBULE AFFINITY-REGULATING KINASE"/>
    <property type="match status" value="1"/>
</dbReference>
<dbReference type="PANTHER" id="PTHR24346:SF110">
    <property type="entry name" value="NON-SPECIFIC SERINE_THREONINE PROTEIN KINASE"/>
    <property type="match status" value="1"/>
</dbReference>
<dbReference type="Pfam" id="PF00069">
    <property type="entry name" value="Pkinase"/>
    <property type="match status" value="1"/>
</dbReference>
<dbReference type="SMART" id="SM00220">
    <property type="entry name" value="S_TKc"/>
    <property type="match status" value="1"/>
</dbReference>
<dbReference type="SUPFAM" id="SSF56112">
    <property type="entry name" value="Protein kinase-like (PK-like)"/>
    <property type="match status" value="1"/>
</dbReference>
<dbReference type="PROSITE" id="PS50011">
    <property type="entry name" value="PROTEIN_KINASE_DOM"/>
    <property type="match status" value="1"/>
</dbReference>
<dbReference type="PROSITE" id="PS00108">
    <property type="entry name" value="PROTEIN_KINASE_ST"/>
    <property type="match status" value="1"/>
</dbReference>
<gene>
    <name type="ORF">DDB_G0277165</name>
</gene>
<name>Y7165_DICDI</name>
<protein>
    <recommendedName>
        <fullName>Probable serine/threonine-protein kinase DDB_G0277165</fullName>
        <ecNumber>2.7.11.1</ecNumber>
    </recommendedName>
</protein>
<organism>
    <name type="scientific">Dictyostelium discoideum</name>
    <name type="common">Social amoeba</name>
    <dbReference type="NCBI Taxonomy" id="44689"/>
    <lineage>
        <taxon>Eukaryota</taxon>
        <taxon>Amoebozoa</taxon>
        <taxon>Evosea</taxon>
        <taxon>Eumycetozoa</taxon>
        <taxon>Dictyostelia</taxon>
        <taxon>Dictyosteliales</taxon>
        <taxon>Dictyosteliaceae</taxon>
        <taxon>Dictyostelium</taxon>
    </lineage>
</organism>
<reference key="1">
    <citation type="journal article" date="2002" name="Nature">
        <title>Sequence and analysis of chromosome 2 of Dictyostelium discoideum.</title>
        <authorList>
            <person name="Gloeckner G."/>
            <person name="Eichinger L."/>
            <person name="Szafranski K."/>
            <person name="Pachebat J.A."/>
            <person name="Bankier A.T."/>
            <person name="Dear P.H."/>
            <person name="Lehmann R."/>
            <person name="Baumgart C."/>
            <person name="Parra G."/>
            <person name="Abril J.F."/>
            <person name="Guigo R."/>
            <person name="Kumpf K."/>
            <person name="Tunggal B."/>
            <person name="Cox E.C."/>
            <person name="Quail M.A."/>
            <person name="Platzer M."/>
            <person name="Rosenthal A."/>
            <person name="Noegel A.A."/>
        </authorList>
    </citation>
    <scope>NUCLEOTIDE SEQUENCE [LARGE SCALE GENOMIC DNA]</scope>
    <source>
        <strain>AX4</strain>
    </source>
</reference>
<reference key="2">
    <citation type="journal article" date="2005" name="Nature">
        <title>The genome of the social amoeba Dictyostelium discoideum.</title>
        <authorList>
            <person name="Eichinger L."/>
            <person name="Pachebat J.A."/>
            <person name="Gloeckner G."/>
            <person name="Rajandream M.A."/>
            <person name="Sucgang R."/>
            <person name="Berriman M."/>
            <person name="Song J."/>
            <person name="Olsen R."/>
            <person name="Szafranski K."/>
            <person name="Xu Q."/>
            <person name="Tunggal B."/>
            <person name="Kummerfeld S."/>
            <person name="Madera M."/>
            <person name="Konfortov B.A."/>
            <person name="Rivero F."/>
            <person name="Bankier A.T."/>
            <person name="Lehmann R."/>
            <person name="Hamlin N."/>
            <person name="Davies R."/>
            <person name="Gaudet P."/>
            <person name="Fey P."/>
            <person name="Pilcher K."/>
            <person name="Chen G."/>
            <person name="Saunders D."/>
            <person name="Sodergren E.J."/>
            <person name="Davis P."/>
            <person name="Kerhornou A."/>
            <person name="Nie X."/>
            <person name="Hall N."/>
            <person name="Anjard C."/>
            <person name="Hemphill L."/>
            <person name="Bason N."/>
            <person name="Farbrother P."/>
            <person name="Desany B."/>
            <person name="Just E."/>
            <person name="Morio T."/>
            <person name="Rost R."/>
            <person name="Churcher C.M."/>
            <person name="Cooper J."/>
            <person name="Haydock S."/>
            <person name="van Driessche N."/>
            <person name="Cronin A."/>
            <person name="Goodhead I."/>
            <person name="Muzny D.M."/>
            <person name="Mourier T."/>
            <person name="Pain A."/>
            <person name="Lu M."/>
            <person name="Harper D."/>
            <person name="Lindsay R."/>
            <person name="Hauser H."/>
            <person name="James K.D."/>
            <person name="Quiles M."/>
            <person name="Madan Babu M."/>
            <person name="Saito T."/>
            <person name="Buchrieser C."/>
            <person name="Wardroper A."/>
            <person name="Felder M."/>
            <person name="Thangavelu M."/>
            <person name="Johnson D."/>
            <person name="Knights A."/>
            <person name="Loulseged H."/>
            <person name="Mungall K.L."/>
            <person name="Oliver K."/>
            <person name="Price C."/>
            <person name="Quail M.A."/>
            <person name="Urushihara H."/>
            <person name="Hernandez J."/>
            <person name="Rabbinowitsch E."/>
            <person name="Steffen D."/>
            <person name="Sanders M."/>
            <person name="Ma J."/>
            <person name="Kohara Y."/>
            <person name="Sharp S."/>
            <person name="Simmonds M.N."/>
            <person name="Spiegler S."/>
            <person name="Tivey A."/>
            <person name="Sugano S."/>
            <person name="White B."/>
            <person name="Walker D."/>
            <person name="Woodward J.R."/>
            <person name="Winckler T."/>
            <person name="Tanaka Y."/>
            <person name="Shaulsky G."/>
            <person name="Schleicher M."/>
            <person name="Weinstock G.M."/>
            <person name="Rosenthal A."/>
            <person name="Cox E.C."/>
            <person name="Chisholm R.L."/>
            <person name="Gibbs R.A."/>
            <person name="Loomis W.F."/>
            <person name="Platzer M."/>
            <person name="Kay R.R."/>
            <person name="Williams J.G."/>
            <person name="Dear P.H."/>
            <person name="Noegel A.A."/>
            <person name="Barrell B.G."/>
            <person name="Kuspa A."/>
        </authorList>
    </citation>
    <scope>NUCLEOTIDE SEQUENCE [LARGE SCALE GENOMIC DNA]</scope>
    <source>
        <strain>AX4</strain>
    </source>
</reference>